<feature type="chain" id="PRO_0000259182" description="Large ribosomal subunit protein bL31">
    <location>
        <begin position="1"/>
        <end position="72"/>
    </location>
</feature>
<sequence>MKKDIHPKAVPAKIIYQGKVVMETLSTRPEIHVDVWSGAHPFWTGEERFVDTEGRVDKFNKRFGDSYRKNRK</sequence>
<evidence type="ECO:0000255" key="1">
    <source>
        <dbReference type="HAMAP-Rule" id="MF_00501"/>
    </source>
</evidence>
<evidence type="ECO:0000305" key="2"/>
<proteinExistence type="inferred from homology"/>
<keyword id="KW-0687">Ribonucleoprotein</keyword>
<keyword id="KW-0689">Ribosomal protein</keyword>
<keyword id="KW-0694">RNA-binding</keyword>
<keyword id="KW-0699">rRNA-binding</keyword>
<gene>
    <name evidence="1" type="primary">rpmE</name>
    <name type="ordered locus">Dgeo_0577</name>
</gene>
<protein>
    <recommendedName>
        <fullName evidence="1">Large ribosomal subunit protein bL31</fullName>
    </recommendedName>
    <alternativeName>
        <fullName evidence="2">50S ribosomal protein L31</fullName>
    </alternativeName>
</protein>
<comment type="function">
    <text evidence="1">Binds the 23S rRNA.</text>
</comment>
<comment type="subunit">
    <text evidence="1">Part of the 50S ribosomal subunit.</text>
</comment>
<comment type="similarity">
    <text evidence="1">Belongs to the bacterial ribosomal protein bL31 family. Type A subfamily.</text>
</comment>
<reference key="1">
    <citation type="submission" date="2006-04" db="EMBL/GenBank/DDBJ databases">
        <title>Complete sequence of chromosome of Deinococcus geothermalis DSM 11300.</title>
        <authorList>
            <person name="Copeland A."/>
            <person name="Lucas S."/>
            <person name="Lapidus A."/>
            <person name="Barry K."/>
            <person name="Detter J.C."/>
            <person name="Glavina del Rio T."/>
            <person name="Hammon N."/>
            <person name="Israni S."/>
            <person name="Dalin E."/>
            <person name="Tice H."/>
            <person name="Pitluck S."/>
            <person name="Brettin T."/>
            <person name="Bruce D."/>
            <person name="Han C."/>
            <person name="Tapia R."/>
            <person name="Saunders E."/>
            <person name="Gilna P."/>
            <person name="Schmutz J."/>
            <person name="Larimer F."/>
            <person name="Land M."/>
            <person name="Hauser L."/>
            <person name="Kyrpides N."/>
            <person name="Kim E."/>
            <person name="Daly M.J."/>
            <person name="Fredrickson J.K."/>
            <person name="Makarova K.S."/>
            <person name="Gaidamakova E.K."/>
            <person name="Zhai M."/>
            <person name="Richardson P."/>
        </authorList>
    </citation>
    <scope>NUCLEOTIDE SEQUENCE [LARGE SCALE GENOMIC DNA]</scope>
    <source>
        <strain>DSM 11300 / CIP 105573 / AG-3a</strain>
    </source>
</reference>
<organism>
    <name type="scientific">Deinococcus geothermalis (strain DSM 11300 / CIP 105573 / AG-3a)</name>
    <dbReference type="NCBI Taxonomy" id="319795"/>
    <lineage>
        <taxon>Bacteria</taxon>
        <taxon>Thermotogati</taxon>
        <taxon>Deinococcota</taxon>
        <taxon>Deinococci</taxon>
        <taxon>Deinococcales</taxon>
        <taxon>Deinococcaceae</taxon>
        <taxon>Deinococcus</taxon>
    </lineage>
</organism>
<name>RL31_DEIGD</name>
<accession>Q1J0V5</accession>
<dbReference type="EMBL" id="CP000359">
    <property type="protein sequence ID" value="ABF44879.1"/>
    <property type="molecule type" value="Genomic_DNA"/>
</dbReference>
<dbReference type="RefSeq" id="WP_011529721.1">
    <property type="nucleotide sequence ID" value="NC_008025.1"/>
</dbReference>
<dbReference type="STRING" id="319795.Dgeo_0577"/>
<dbReference type="KEGG" id="dge:Dgeo_0577"/>
<dbReference type="eggNOG" id="COG0254">
    <property type="taxonomic scope" value="Bacteria"/>
</dbReference>
<dbReference type="HOGENOM" id="CLU_114306_4_2_0"/>
<dbReference type="Proteomes" id="UP000002431">
    <property type="component" value="Chromosome"/>
</dbReference>
<dbReference type="GO" id="GO:1990904">
    <property type="term" value="C:ribonucleoprotein complex"/>
    <property type="evidence" value="ECO:0007669"/>
    <property type="project" value="UniProtKB-KW"/>
</dbReference>
<dbReference type="GO" id="GO:0005840">
    <property type="term" value="C:ribosome"/>
    <property type="evidence" value="ECO:0007669"/>
    <property type="project" value="UniProtKB-KW"/>
</dbReference>
<dbReference type="GO" id="GO:0019843">
    <property type="term" value="F:rRNA binding"/>
    <property type="evidence" value="ECO:0007669"/>
    <property type="project" value="UniProtKB-KW"/>
</dbReference>
<dbReference type="GO" id="GO:0003735">
    <property type="term" value="F:structural constituent of ribosome"/>
    <property type="evidence" value="ECO:0007669"/>
    <property type="project" value="InterPro"/>
</dbReference>
<dbReference type="GO" id="GO:0006412">
    <property type="term" value="P:translation"/>
    <property type="evidence" value="ECO:0007669"/>
    <property type="project" value="UniProtKB-UniRule"/>
</dbReference>
<dbReference type="Gene3D" id="4.10.830.30">
    <property type="entry name" value="Ribosomal protein L31"/>
    <property type="match status" value="1"/>
</dbReference>
<dbReference type="HAMAP" id="MF_00501">
    <property type="entry name" value="Ribosomal_bL31_1"/>
    <property type="match status" value="1"/>
</dbReference>
<dbReference type="InterPro" id="IPR034704">
    <property type="entry name" value="Ribosomal_bL28/bL31-like_sf"/>
</dbReference>
<dbReference type="InterPro" id="IPR002150">
    <property type="entry name" value="Ribosomal_bL31"/>
</dbReference>
<dbReference type="InterPro" id="IPR027491">
    <property type="entry name" value="Ribosomal_bL31_A"/>
</dbReference>
<dbReference type="InterPro" id="IPR042105">
    <property type="entry name" value="Ribosomal_bL31_sf"/>
</dbReference>
<dbReference type="NCBIfam" id="TIGR00105">
    <property type="entry name" value="L31"/>
    <property type="match status" value="1"/>
</dbReference>
<dbReference type="NCBIfam" id="NF001809">
    <property type="entry name" value="PRK00528.1"/>
    <property type="match status" value="1"/>
</dbReference>
<dbReference type="PANTHER" id="PTHR33280">
    <property type="entry name" value="50S RIBOSOMAL PROTEIN L31, CHLOROPLASTIC"/>
    <property type="match status" value="1"/>
</dbReference>
<dbReference type="PANTHER" id="PTHR33280:SF1">
    <property type="entry name" value="LARGE RIBOSOMAL SUBUNIT PROTEIN BL31C"/>
    <property type="match status" value="1"/>
</dbReference>
<dbReference type="Pfam" id="PF01197">
    <property type="entry name" value="Ribosomal_L31"/>
    <property type="match status" value="1"/>
</dbReference>
<dbReference type="PRINTS" id="PR01249">
    <property type="entry name" value="RIBOSOMALL31"/>
</dbReference>
<dbReference type="SUPFAM" id="SSF143800">
    <property type="entry name" value="L28p-like"/>
    <property type="match status" value="1"/>
</dbReference>
<dbReference type="PROSITE" id="PS01143">
    <property type="entry name" value="RIBOSOMAL_L31"/>
    <property type="match status" value="1"/>
</dbReference>